<keyword id="KW-0106">Calcium</keyword>
<keyword id="KW-0130">Cell adhesion</keyword>
<keyword id="KW-1003">Cell membrane</keyword>
<keyword id="KW-0325">Glycoprotein</keyword>
<keyword id="KW-0472">Membrane</keyword>
<keyword id="KW-1185">Reference proteome</keyword>
<keyword id="KW-0677">Repeat</keyword>
<keyword id="KW-0732">Signal</keyword>
<keyword id="KW-0812">Transmembrane</keyword>
<keyword id="KW-1133">Transmembrane helix</keyword>
<organism>
    <name type="scientific">Pan troglodytes</name>
    <name type="common">Chimpanzee</name>
    <dbReference type="NCBI Taxonomy" id="9598"/>
    <lineage>
        <taxon>Eukaryota</taxon>
        <taxon>Metazoa</taxon>
        <taxon>Chordata</taxon>
        <taxon>Craniata</taxon>
        <taxon>Vertebrata</taxon>
        <taxon>Euteleostomi</taxon>
        <taxon>Mammalia</taxon>
        <taxon>Eutheria</taxon>
        <taxon>Euarchontoglires</taxon>
        <taxon>Primates</taxon>
        <taxon>Haplorrhini</taxon>
        <taxon>Catarrhini</taxon>
        <taxon>Hominidae</taxon>
        <taxon>Pan</taxon>
    </lineage>
</organism>
<dbReference type="FunCoup" id="Q5DRE9">
    <property type="interactions" value="38"/>
</dbReference>
<dbReference type="GlyCosmos" id="Q5DRE9">
    <property type="glycosylation" value="3 sites, No reported glycans"/>
</dbReference>
<dbReference type="InParanoid" id="Q5DRE9"/>
<dbReference type="Proteomes" id="UP000002277">
    <property type="component" value="Unplaced"/>
</dbReference>
<dbReference type="GO" id="GO:0005886">
    <property type="term" value="C:plasma membrane"/>
    <property type="evidence" value="ECO:0000318"/>
    <property type="project" value="GO_Central"/>
</dbReference>
<dbReference type="GO" id="GO:0005509">
    <property type="term" value="F:calcium ion binding"/>
    <property type="evidence" value="ECO:0007669"/>
    <property type="project" value="InterPro"/>
</dbReference>
<dbReference type="GO" id="GO:0007155">
    <property type="term" value="P:cell adhesion"/>
    <property type="evidence" value="ECO:0000318"/>
    <property type="project" value="GO_Central"/>
</dbReference>
<dbReference type="GO" id="GO:0007156">
    <property type="term" value="P:homophilic cell adhesion via plasma membrane adhesion molecules"/>
    <property type="evidence" value="ECO:0007669"/>
    <property type="project" value="InterPro"/>
</dbReference>
<dbReference type="GO" id="GO:0007399">
    <property type="term" value="P:nervous system development"/>
    <property type="evidence" value="ECO:0007669"/>
    <property type="project" value="UniProtKB-ARBA"/>
</dbReference>
<dbReference type="CDD" id="cd11304">
    <property type="entry name" value="Cadherin_repeat"/>
    <property type="match status" value="6"/>
</dbReference>
<dbReference type="FunFam" id="2.60.40.60:FF:000001">
    <property type="entry name" value="Protocadherin alpha 2"/>
    <property type="match status" value="1"/>
</dbReference>
<dbReference type="FunFam" id="2.60.40.60:FF:000002">
    <property type="entry name" value="Protocadherin alpha 2"/>
    <property type="match status" value="1"/>
</dbReference>
<dbReference type="FunFam" id="2.60.40.60:FF:000003">
    <property type="entry name" value="Protocadherin alpha 2"/>
    <property type="match status" value="1"/>
</dbReference>
<dbReference type="FunFam" id="2.60.40.60:FF:000006">
    <property type="entry name" value="Protocadherin alpha 2"/>
    <property type="match status" value="1"/>
</dbReference>
<dbReference type="FunFam" id="2.60.40.60:FF:000007">
    <property type="entry name" value="Protocadherin alpha 2"/>
    <property type="match status" value="1"/>
</dbReference>
<dbReference type="FunFam" id="2.60.40.60:FF:000076">
    <property type="entry name" value="Protocadherin alpha 2"/>
    <property type="match status" value="1"/>
</dbReference>
<dbReference type="Gene3D" id="2.60.40.60">
    <property type="entry name" value="Cadherins"/>
    <property type="match status" value="6"/>
</dbReference>
<dbReference type="InterPro" id="IPR002126">
    <property type="entry name" value="Cadherin-like_dom"/>
</dbReference>
<dbReference type="InterPro" id="IPR015919">
    <property type="entry name" value="Cadherin-like_sf"/>
</dbReference>
<dbReference type="InterPro" id="IPR031904">
    <property type="entry name" value="Cadherin_CBD"/>
</dbReference>
<dbReference type="InterPro" id="IPR020894">
    <property type="entry name" value="Cadherin_CS"/>
</dbReference>
<dbReference type="InterPro" id="IPR013164">
    <property type="entry name" value="Cadherin_N"/>
</dbReference>
<dbReference type="InterPro" id="IPR050174">
    <property type="entry name" value="Protocadherin/Cadherin-CA"/>
</dbReference>
<dbReference type="PANTHER" id="PTHR24028">
    <property type="entry name" value="CADHERIN-87A"/>
    <property type="match status" value="1"/>
</dbReference>
<dbReference type="PANTHER" id="PTHR24028:SF327">
    <property type="entry name" value="PROTOCADHERIN ALPHA-3"/>
    <property type="match status" value="1"/>
</dbReference>
<dbReference type="Pfam" id="PF00028">
    <property type="entry name" value="Cadherin"/>
    <property type="match status" value="5"/>
</dbReference>
<dbReference type="Pfam" id="PF08266">
    <property type="entry name" value="Cadherin_2"/>
    <property type="match status" value="1"/>
</dbReference>
<dbReference type="Pfam" id="PF15974">
    <property type="entry name" value="Cadherin_tail"/>
    <property type="match status" value="1"/>
</dbReference>
<dbReference type="PRINTS" id="PR00205">
    <property type="entry name" value="CADHERIN"/>
</dbReference>
<dbReference type="SMART" id="SM00112">
    <property type="entry name" value="CA"/>
    <property type="match status" value="6"/>
</dbReference>
<dbReference type="SUPFAM" id="SSF49313">
    <property type="entry name" value="Cadherin-like"/>
    <property type="match status" value="6"/>
</dbReference>
<dbReference type="PROSITE" id="PS00232">
    <property type="entry name" value="CADHERIN_1"/>
    <property type="match status" value="5"/>
</dbReference>
<dbReference type="PROSITE" id="PS50268">
    <property type="entry name" value="CADHERIN_2"/>
    <property type="match status" value="6"/>
</dbReference>
<proteinExistence type="inferred from homology"/>
<evidence type="ECO:0000250" key="1"/>
<evidence type="ECO:0000255" key="2"/>
<evidence type="ECO:0000255" key="3">
    <source>
        <dbReference type="PROSITE-ProRule" id="PRU00043"/>
    </source>
</evidence>
<evidence type="ECO:0000256" key="4">
    <source>
        <dbReference type="SAM" id="MobiDB-lite"/>
    </source>
</evidence>
<name>PCDA3_PANTR</name>
<comment type="function">
    <text>Potential calcium-dependent cell-adhesion protein. May be involved in the establishment and maintenance of specific neuronal connections in the brain.</text>
</comment>
<comment type="subcellular location">
    <subcellularLocation>
        <location evidence="1">Cell membrane</location>
        <topology evidence="1">Single-pass type I membrane protein</topology>
    </subcellularLocation>
</comment>
<feature type="signal peptide" evidence="2">
    <location>
        <begin position="1"/>
        <end position="29"/>
    </location>
</feature>
<feature type="chain" id="PRO_0000003889" description="Protocadherin alpha-3">
    <location>
        <begin position="30"/>
        <end position="950"/>
    </location>
</feature>
<feature type="topological domain" description="Extracellular" evidence="2">
    <location>
        <begin position="30"/>
        <end position="697"/>
    </location>
</feature>
<feature type="transmembrane region" description="Helical" evidence="2">
    <location>
        <begin position="698"/>
        <end position="718"/>
    </location>
</feature>
<feature type="topological domain" description="Cytoplasmic" evidence="2">
    <location>
        <begin position="719"/>
        <end position="950"/>
    </location>
</feature>
<feature type="domain" description="Cadherin 1" evidence="3">
    <location>
        <begin position="30"/>
        <end position="133"/>
    </location>
</feature>
<feature type="domain" description="Cadherin 2" evidence="3">
    <location>
        <begin position="134"/>
        <end position="242"/>
    </location>
</feature>
<feature type="domain" description="Cadherin 3" evidence="3">
    <location>
        <begin position="243"/>
        <end position="350"/>
    </location>
</feature>
<feature type="domain" description="Cadherin 4" evidence="3">
    <location>
        <begin position="351"/>
        <end position="455"/>
    </location>
</feature>
<feature type="domain" description="Cadherin 5" evidence="3">
    <location>
        <begin position="456"/>
        <end position="565"/>
    </location>
</feature>
<feature type="domain" description="Cadherin 6" evidence="3">
    <location>
        <begin position="581"/>
        <end position="678"/>
    </location>
</feature>
<feature type="repeat" description="PXXP 1">
    <location>
        <begin position="734"/>
        <end position="737"/>
    </location>
</feature>
<feature type="repeat" description="PXXP 2">
    <location>
        <begin position="774"/>
        <end position="777"/>
    </location>
</feature>
<feature type="repeat" description="PXXP 3">
    <location>
        <begin position="799"/>
        <end position="802"/>
    </location>
</feature>
<feature type="repeat" description="PXXP 4">
    <location>
        <begin position="832"/>
        <end position="835"/>
    </location>
</feature>
<feature type="repeat" description="PXXP 5">
    <location>
        <begin position="873"/>
        <end position="876"/>
    </location>
</feature>
<feature type="repeat" description="PXXP 6">
    <location>
        <begin position="891"/>
        <end position="894"/>
    </location>
</feature>
<feature type="region of interest" description="6 X 4 AA repeats of P-X-X-P">
    <location>
        <begin position="734"/>
        <end position="894"/>
    </location>
</feature>
<feature type="region of interest" description="Disordered" evidence="4">
    <location>
        <begin position="777"/>
        <end position="806"/>
    </location>
</feature>
<feature type="region of interest" description="Disordered" evidence="4">
    <location>
        <begin position="831"/>
        <end position="856"/>
    </location>
</feature>
<feature type="region of interest" description="Disordered" evidence="4">
    <location>
        <begin position="869"/>
        <end position="889"/>
    </location>
</feature>
<feature type="region of interest" description="Disordered" evidence="4">
    <location>
        <begin position="901"/>
        <end position="950"/>
    </location>
</feature>
<feature type="compositionally biased region" description="Basic and acidic residues" evidence="4">
    <location>
        <begin position="782"/>
        <end position="797"/>
    </location>
</feature>
<feature type="compositionally biased region" description="Basic and acidic residues" evidence="4">
    <location>
        <begin position="909"/>
        <end position="923"/>
    </location>
</feature>
<feature type="glycosylation site" description="N-linked (GlcNAc...) asparagine" evidence="2">
    <location>
        <position position="257"/>
    </location>
</feature>
<feature type="glycosylation site" description="N-linked (GlcNAc...) asparagine" evidence="2">
    <location>
        <position position="265"/>
    </location>
</feature>
<feature type="glycosylation site" description="N-linked (GlcNAc...) asparagine" evidence="2">
    <location>
        <position position="548"/>
    </location>
</feature>
<reference key="1">
    <citation type="journal article" date="2005" name="Nature">
        <title>Initial sequence of the chimpanzee genome and comparison with the human genome.</title>
        <authorList>
            <consortium name="Chimpanzee sequencing and analysis consortium"/>
        </authorList>
    </citation>
    <scope>NUCLEOTIDE SEQUENCE [LARGE SCALE GENOMIC DNA]</scope>
</reference>
<reference key="2">
    <citation type="journal article" date="2005" name="Genetics">
        <title>Comparative genomics and diversifying selection of the clustered vertebrate protocadherin genes.</title>
        <authorList>
            <person name="Wu Q."/>
        </authorList>
    </citation>
    <scope>IDENTIFICATION</scope>
</reference>
<gene>
    <name type="primary">PCDHA3</name>
</gene>
<sequence length="950" mass="102467">MLFSWREDPGAQCLLLSLLLLAASEVGSGQLHYSVSEEAKHGTFVGRIAQDLGLELAELVPRLFRVASKRHGDLLEVNLQNGILFVNSRIDREELCGRSAECSIHLEVIVDRPLQVFHVEVEVKDINDNAPVFPMSVKNLFISESRQPGSRFSLEGASDADIGTNSLLTYSLDSTEYFTLDVKRNDEEIKSLGLVLKKYLNREDTPKHYLLITAIDGGKPELTGTTQLKITVLDVNDNAPAFERTIYKVRLLENAPNGTLVVTVNATDLDEGVNKDIAYSFNTDMSADILSKFHLDPVNGQISVKGNIDFEESKSYEIQVEATDKGNPPMSDHCTVLLEIVDINDNVPELVIHSLSLPVLEDSPLSTVIALISVSDRDSGVNGQVTCSLTPHVPFKLVSTFKNYYSLVLDSPLDRESVSAYELVVTARDGGSPSLWATASVSVEVADVNDNAPAFSQSEYTVFVKENNPPGCHIFTVSARDADAQENALVSYSLVERRVGDRALSSYVSVHAESGKVYALQPLDHEELELLQFQVSARDAGVPPLGSNVTLQVFVLDENDNAPALLMPRVGGIGGAVSELVPRSVGAGHVVAKVRAVDADSGYNAWLXYELQPGTGGARIPFRVGLYTGEISTTRALDEVDVPRHRLLVLVKDHGEPSLTATATVLVSLVESGQAPKASSQASAGATGPEAALVDVNVYLIVAICAVSSLLVLTLLLYTALRCSAPPTEGACGPGKPTLVCSSAVGSWSYSQQRQQRVCSGEGLPKTDLMAFSPSLPPCPISRDREEKQDVDVDLSAKPRQPNPDWRYSASLRAGMHSSVHLEEAGILRAGPGGPDQQWPTVSSATPEPEAGEVSPPVGAGVNSNSWTFKYGPGNPKQSGPGELPDKFIIPGSPAIISIRQEPANSQIDKSDFITFGKKEETKKKKKKKKGNKTQEKKEKGNSTTDNSDQ</sequence>
<protein>
    <recommendedName>
        <fullName>Protocadherin alpha-3</fullName>
        <shortName>PCDH-alpha-3</shortName>
    </recommendedName>
</protein>
<accession>Q5DRE9</accession>